<proteinExistence type="inferred from homology"/>
<feature type="chain" id="PRO_0000428458" description="Tryptophan synthase alpha chain">
    <location>
        <begin position="1"/>
        <end position="270"/>
    </location>
</feature>
<feature type="active site" description="Proton acceptor" evidence="1">
    <location>
        <position position="57"/>
    </location>
</feature>
<feature type="active site" description="Proton acceptor" evidence="1">
    <location>
        <position position="68"/>
    </location>
</feature>
<sequence length="270" mass="27728">MVAVEQSEASRLGPVFDSCRANNRAALIGYLPTGYPDVPASVAAMTALVESGCDIIEVGVPYSDPGMDGPTIARATEAALRGGVRVRDTLAAVEAISIAGGRAVVMTYWNPVLRYGVDAFARDLAAAGGLGLITPDLIPDEAQQWLAASEEHRLDRIFLVAPSSTPERLAATVEASRGFVYAASTMGVTGARDAVSQAAPELVGRVKAVSDIPVGVGLGVRSRAQAAQIAQYADGVIVGSALVTALTEGLPRLRALTGELAAGVRLGMSA</sequence>
<gene>
    <name evidence="1" type="primary">trpA</name>
    <name type="ordered locus">MT1648</name>
</gene>
<protein>
    <recommendedName>
        <fullName evidence="1">Tryptophan synthase alpha chain</fullName>
        <ecNumber evidence="1">4.2.1.20</ecNumber>
    </recommendedName>
</protein>
<reference key="1">
    <citation type="journal article" date="2002" name="J. Bacteriol.">
        <title>Whole-genome comparison of Mycobacterium tuberculosis clinical and laboratory strains.</title>
        <authorList>
            <person name="Fleischmann R.D."/>
            <person name="Alland D."/>
            <person name="Eisen J.A."/>
            <person name="Carpenter L."/>
            <person name="White O."/>
            <person name="Peterson J.D."/>
            <person name="DeBoy R.T."/>
            <person name="Dodson R.J."/>
            <person name="Gwinn M.L."/>
            <person name="Haft D.H."/>
            <person name="Hickey E.K."/>
            <person name="Kolonay J.F."/>
            <person name="Nelson W.C."/>
            <person name="Umayam L.A."/>
            <person name="Ermolaeva M.D."/>
            <person name="Salzberg S.L."/>
            <person name="Delcher A."/>
            <person name="Utterback T.R."/>
            <person name="Weidman J.F."/>
            <person name="Khouri H.M."/>
            <person name="Gill J."/>
            <person name="Mikula A."/>
            <person name="Bishai W."/>
            <person name="Jacobs W.R. Jr."/>
            <person name="Venter J.C."/>
            <person name="Fraser C.M."/>
        </authorList>
    </citation>
    <scope>NUCLEOTIDE SEQUENCE [LARGE SCALE GENOMIC DNA]</scope>
    <source>
        <strain>CDC 1551 / Oshkosh</strain>
    </source>
</reference>
<organism>
    <name type="scientific">Mycobacterium tuberculosis (strain CDC 1551 / Oshkosh)</name>
    <dbReference type="NCBI Taxonomy" id="83331"/>
    <lineage>
        <taxon>Bacteria</taxon>
        <taxon>Bacillati</taxon>
        <taxon>Actinomycetota</taxon>
        <taxon>Actinomycetes</taxon>
        <taxon>Mycobacteriales</taxon>
        <taxon>Mycobacteriaceae</taxon>
        <taxon>Mycobacterium</taxon>
        <taxon>Mycobacterium tuberculosis complex</taxon>
    </lineage>
</organism>
<dbReference type="EC" id="4.2.1.20" evidence="1"/>
<dbReference type="EMBL" id="AE000516">
    <property type="protein sequence ID" value="AAK45917.1"/>
    <property type="molecule type" value="Genomic_DNA"/>
</dbReference>
<dbReference type="PIR" id="C70557">
    <property type="entry name" value="C70557"/>
</dbReference>
<dbReference type="RefSeq" id="WP_003407999.1">
    <property type="nucleotide sequence ID" value="NZ_KK341227.1"/>
</dbReference>
<dbReference type="SMR" id="P9WFY0"/>
<dbReference type="GeneID" id="45425581"/>
<dbReference type="KEGG" id="mtc:MT1648"/>
<dbReference type="PATRIC" id="fig|83331.31.peg.1771"/>
<dbReference type="HOGENOM" id="CLU_016734_0_0_11"/>
<dbReference type="UniPathway" id="UPA00035">
    <property type="reaction ID" value="UER00044"/>
</dbReference>
<dbReference type="Proteomes" id="UP000001020">
    <property type="component" value="Chromosome"/>
</dbReference>
<dbReference type="GO" id="GO:0005829">
    <property type="term" value="C:cytosol"/>
    <property type="evidence" value="ECO:0007669"/>
    <property type="project" value="TreeGrafter"/>
</dbReference>
<dbReference type="GO" id="GO:0004834">
    <property type="term" value="F:tryptophan synthase activity"/>
    <property type="evidence" value="ECO:0007669"/>
    <property type="project" value="UniProtKB-UniRule"/>
</dbReference>
<dbReference type="CDD" id="cd04724">
    <property type="entry name" value="Tryptophan_synthase_alpha"/>
    <property type="match status" value="1"/>
</dbReference>
<dbReference type="FunFam" id="3.20.20.70:FF:000037">
    <property type="entry name" value="Tryptophan synthase alpha chain"/>
    <property type="match status" value="1"/>
</dbReference>
<dbReference type="Gene3D" id="3.20.20.70">
    <property type="entry name" value="Aldolase class I"/>
    <property type="match status" value="1"/>
</dbReference>
<dbReference type="HAMAP" id="MF_00131">
    <property type="entry name" value="Trp_synth_alpha"/>
    <property type="match status" value="1"/>
</dbReference>
<dbReference type="InterPro" id="IPR013785">
    <property type="entry name" value="Aldolase_TIM"/>
</dbReference>
<dbReference type="InterPro" id="IPR011060">
    <property type="entry name" value="RibuloseP-bd_barrel"/>
</dbReference>
<dbReference type="InterPro" id="IPR018204">
    <property type="entry name" value="Trp_synthase_alpha_AS"/>
</dbReference>
<dbReference type="InterPro" id="IPR002028">
    <property type="entry name" value="Trp_synthase_suA"/>
</dbReference>
<dbReference type="NCBIfam" id="TIGR00262">
    <property type="entry name" value="trpA"/>
    <property type="match status" value="1"/>
</dbReference>
<dbReference type="PANTHER" id="PTHR43406:SF1">
    <property type="entry name" value="TRYPTOPHAN SYNTHASE ALPHA CHAIN, CHLOROPLASTIC"/>
    <property type="match status" value="1"/>
</dbReference>
<dbReference type="PANTHER" id="PTHR43406">
    <property type="entry name" value="TRYPTOPHAN SYNTHASE, ALPHA CHAIN"/>
    <property type="match status" value="1"/>
</dbReference>
<dbReference type="Pfam" id="PF00290">
    <property type="entry name" value="Trp_syntA"/>
    <property type="match status" value="1"/>
</dbReference>
<dbReference type="SUPFAM" id="SSF51366">
    <property type="entry name" value="Ribulose-phoshate binding barrel"/>
    <property type="match status" value="1"/>
</dbReference>
<dbReference type="PROSITE" id="PS00167">
    <property type="entry name" value="TRP_SYNTHASE_ALPHA"/>
    <property type="match status" value="1"/>
</dbReference>
<name>TRPA_MYCTO</name>
<comment type="function">
    <text evidence="1">The alpha subunit is responsible for the aldol cleavage of indoleglycerol phosphate to indole and glyceraldehyde 3-phosphate.</text>
</comment>
<comment type="catalytic activity">
    <reaction evidence="1">
        <text>(1S,2R)-1-C-(indol-3-yl)glycerol 3-phosphate + L-serine = D-glyceraldehyde 3-phosphate + L-tryptophan + H2O</text>
        <dbReference type="Rhea" id="RHEA:10532"/>
        <dbReference type="ChEBI" id="CHEBI:15377"/>
        <dbReference type="ChEBI" id="CHEBI:33384"/>
        <dbReference type="ChEBI" id="CHEBI:57912"/>
        <dbReference type="ChEBI" id="CHEBI:58866"/>
        <dbReference type="ChEBI" id="CHEBI:59776"/>
        <dbReference type="EC" id="4.2.1.20"/>
    </reaction>
</comment>
<comment type="pathway">
    <text evidence="1">Amino-acid biosynthesis; L-tryptophan biosynthesis; L-tryptophan from chorismate: step 5/5.</text>
</comment>
<comment type="subunit">
    <text evidence="1">Tetramer of two alpha and two beta chains.</text>
</comment>
<comment type="similarity">
    <text evidence="1">Belongs to the TrpA family.</text>
</comment>
<keyword id="KW-0028">Amino-acid biosynthesis</keyword>
<keyword id="KW-0057">Aromatic amino acid biosynthesis</keyword>
<keyword id="KW-0456">Lyase</keyword>
<keyword id="KW-1185">Reference proteome</keyword>
<keyword id="KW-0822">Tryptophan biosynthesis</keyword>
<accession>P9WFY0</accession>
<accession>L0T7F3</accession>
<accession>O06130</accession>
<accession>P66980</accession>
<evidence type="ECO:0000255" key="1">
    <source>
        <dbReference type="HAMAP-Rule" id="MF_00131"/>
    </source>
</evidence>